<name>RR3_CUSEX</name>
<feature type="chain" id="PRO_0000323321" description="Small ribosomal subunit protein uS3c">
    <location>
        <begin position="1"/>
        <end position="219"/>
    </location>
</feature>
<feature type="domain" description="KH type-2">
    <location>
        <begin position="43"/>
        <end position="118"/>
    </location>
</feature>
<evidence type="ECO:0000250" key="1"/>
<evidence type="ECO:0000305" key="2"/>
<keyword id="KW-0934">Plastid</keyword>
<keyword id="KW-0687">Ribonucleoprotein</keyword>
<keyword id="KW-0689">Ribosomal protein</keyword>
<keyword id="KW-0694">RNA-binding</keyword>
<keyword id="KW-0699">rRNA-binding</keyword>
<gene>
    <name type="primary">rps3</name>
</gene>
<sequence>MGQKINPLGFRLGTTQDHHSLWFSQPKNYSESLQEDKKIRDFIKNYVQNNMIKASGAEGIARIYIQKRIDLIQVVIFMGFPKLLIETRPQGIKELQRTLQKEFNFGNQKLNITITRIEKPYGNPNILAEFIAVQLKNRVSFRKAMKKAIELAEQADTKGIQVQIAGRVDGKEIARVEWIREGRVPRQTIRANLDYCSYPVRTIYGVLGVKIWIFLDQAK</sequence>
<geneLocation type="plastid"/>
<proteinExistence type="inferred from homology"/>
<comment type="subunit">
    <text evidence="1">Part of the 30S ribosomal subunit.</text>
</comment>
<comment type="subcellular location">
    <subcellularLocation>
        <location>Plastid</location>
    </subcellularLocation>
</comment>
<comment type="similarity">
    <text evidence="2">Belongs to the universal ribosomal protein uS3 family.</text>
</comment>
<comment type="caution">
    <text evidence="2">Young tissue from this organism is photosynthetic and contains some thylakoids, although the photosynthetic activity does not exceed the light compensation point.</text>
</comment>
<accession>A8W3F9</accession>
<dbReference type="EMBL" id="EU189132">
    <property type="protein sequence ID" value="ABW83730.1"/>
    <property type="molecule type" value="Genomic_DNA"/>
</dbReference>
<dbReference type="RefSeq" id="YP_001542566.1">
    <property type="nucleotide sequence ID" value="NC_009963.1"/>
</dbReference>
<dbReference type="SMR" id="A8W3F9"/>
<dbReference type="GeneID" id="5729612"/>
<dbReference type="GO" id="GO:0022627">
    <property type="term" value="C:cytosolic small ribosomal subunit"/>
    <property type="evidence" value="ECO:0007669"/>
    <property type="project" value="TreeGrafter"/>
</dbReference>
<dbReference type="GO" id="GO:0009536">
    <property type="term" value="C:plastid"/>
    <property type="evidence" value="ECO:0007669"/>
    <property type="project" value="UniProtKB-SubCell"/>
</dbReference>
<dbReference type="GO" id="GO:0019843">
    <property type="term" value="F:rRNA binding"/>
    <property type="evidence" value="ECO:0007669"/>
    <property type="project" value="UniProtKB-KW"/>
</dbReference>
<dbReference type="GO" id="GO:0003735">
    <property type="term" value="F:structural constituent of ribosome"/>
    <property type="evidence" value="ECO:0007669"/>
    <property type="project" value="InterPro"/>
</dbReference>
<dbReference type="GO" id="GO:0006412">
    <property type="term" value="P:translation"/>
    <property type="evidence" value="ECO:0007669"/>
    <property type="project" value="InterPro"/>
</dbReference>
<dbReference type="CDD" id="cd02412">
    <property type="entry name" value="KH-II_30S_S3"/>
    <property type="match status" value="1"/>
</dbReference>
<dbReference type="FunFam" id="3.30.1140.32:FF:000003">
    <property type="entry name" value="30S ribosomal protein S3, chloroplastic"/>
    <property type="match status" value="1"/>
</dbReference>
<dbReference type="FunFam" id="3.30.300.20:FF:000008">
    <property type="entry name" value="30S ribosomal protein S3, chloroplastic"/>
    <property type="match status" value="1"/>
</dbReference>
<dbReference type="Gene3D" id="3.30.300.20">
    <property type="match status" value="1"/>
</dbReference>
<dbReference type="Gene3D" id="3.30.1140.32">
    <property type="entry name" value="Ribosomal protein S3, C-terminal domain"/>
    <property type="match status" value="1"/>
</dbReference>
<dbReference type="HAMAP" id="MF_01309_B">
    <property type="entry name" value="Ribosomal_uS3_B"/>
    <property type="match status" value="1"/>
</dbReference>
<dbReference type="InterPro" id="IPR015946">
    <property type="entry name" value="KH_dom-like_a/b"/>
</dbReference>
<dbReference type="InterPro" id="IPR009019">
    <property type="entry name" value="KH_sf_prok-type"/>
</dbReference>
<dbReference type="InterPro" id="IPR036419">
    <property type="entry name" value="Ribosomal_S3_C_sf"/>
</dbReference>
<dbReference type="InterPro" id="IPR005704">
    <property type="entry name" value="Ribosomal_uS3_bac-typ"/>
</dbReference>
<dbReference type="InterPro" id="IPR001351">
    <property type="entry name" value="Ribosomal_uS3_C"/>
</dbReference>
<dbReference type="InterPro" id="IPR018280">
    <property type="entry name" value="Ribosomal_uS3_CS"/>
</dbReference>
<dbReference type="NCBIfam" id="TIGR01009">
    <property type="entry name" value="rpsC_bact"/>
    <property type="match status" value="1"/>
</dbReference>
<dbReference type="PANTHER" id="PTHR11760">
    <property type="entry name" value="30S/40S RIBOSOMAL PROTEIN S3"/>
    <property type="match status" value="1"/>
</dbReference>
<dbReference type="PANTHER" id="PTHR11760:SF19">
    <property type="entry name" value="SMALL RIBOSOMAL SUBUNIT PROTEIN US3C"/>
    <property type="match status" value="1"/>
</dbReference>
<dbReference type="Pfam" id="PF00189">
    <property type="entry name" value="Ribosomal_S3_C"/>
    <property type="match status" value="1"/>
</dbReference>
<dbReference type="SUPFAM" id="SSF54814">
    <property type="entry name" value="Prokaryotic type KH domain (KH-domain type II)"/>
    <property type="match status" value="1"/>
</dbReference>
<dbReference type="SUPFAM" id="SSF54821">
    <property type="entry name" value="Ribosomal protein S3 C-terminal domain"/>
    <property type="match status" value="1"/>
</dbReference>
<dbReference type="PROSITE" id="PS00548">
    <property type="entry name" value="RIBOSOMAL_S3"/>
    <property type="match status" value="1"/>
</dbReference>
<organism>
    <name type="scientific">Cuscuta exaltata</name>
    <name type="common">Tall dodder</name>
    <dbReference type="NCBI Taxonomy" id="476139"/>
    <lineage>
        <taxon>Eukaryota</taxon>
        <taxon>Viridiplantae</taxon>
        <taxon>Streptophyta</taxon>
        <taxon>Embryophyta</taxon>
        <taxon>Tracheophyta</taxon>
        <taxon>Spermatophyta</taxon>
        <taxon>Magnoliopsida</taxon>
        <taxon>eudicotyledons</taxon>
        <taxon>Gunneridae</taxon>
        <taxon>Pentapetalae</taxon>
        <taxon>asterids</taxon>
        <taxon>lamiids</taxon>
        <taxon>Solanales</taxon>
        <taxon>Convolvulaceae</taxon>
        <taxon>Cuscuteae</taxon>
        <taxon>Cuscuta</taxon>
        <taxon>Cuscuta subgen. Monogynella</taxon>
    </lineage>
</organism>
<reference key="1">
    <citation type="journal article" date="2007" name="BMC Plant Biol.">
        <title>Complete plastid genome sequences suggest strong selection for retention of photosynthetic genes in the parasitic plant genus Cuscuta.</title>
        <authorList>
            <person name="McNeal J.R."/>
            <person name="Kuehl J.V."/>
            <person name="Boore J.L."/>
            <person name="dePamphilis C.W."/>
        </authorList>
    </citation>
    <scope>NUCLEOTIDE SEQUENCE [LARGE SCALE GENOMIC DNA]</scope>
</reference>
<protein>
    <recommendedName>
        <fullName evidence="2">Small ribosomal subunit protein uS3c</fullName>
    </recommendedName>
    <alternativeName>
        <fullName>Plastid 30S ribosomal protein S3</fullName>
    </alternativeName>
</protein>